<dbReference type="EMBL" id="CP000921">
    <property type="protein sequence ID" value="ACO23313.1"/>
    <property type="molecule type" value="Genomic_DNA"/>
</dbReference>
<dbReference type="RefSeq" id="WP_001018251.1">
    <property type="nucleotide sequence ID" value="NC_012469.1"/>
</dbReference>
<dbReference type="SMR" id="C1CSP2"/>
<dbReference type="GeneID" id="93847676"/>
<dbReference type="KEGG" id="snt:SPT_1565"/>
<dbReference type="HOGENOM" id="CLU_148518_0_0_9"/>
<dbReference type="GO" id="GO:0022627">
    <property type="term" value="C:cytosolic small ribosomal subunit"/>
    <property type="evidence" value="ECO:0007669"/>
    <property type="project" value="TreeGrafter"/>
</dbReference>
<dbReference type="GO" id="GO:0019843">
    <property type="term" value="F:rRNA binding"/>
    <property type="evidence" value="ECO:0007669"/>
    <property type="project" value="UniProtKB-UniRule"/>
</dbReference>
<dbReference type="GO" id="GO:0003735">
    <property type="term" value="F:structural constituent of ribosome"/>
    <property type="evidence" value="ECO:0007669"/>
    <property type="project" value="InterPro"/>
</dbReference>
<dbReference type="GO" id="GO:0006412">
    <property type="term" value="P:translation"/>
    <property type="evidence" value="ECO:0007669"/>
    <property type="project" value="UniProtKB-UniRule"/>
</dbReference>
<dbReference type="CDD" id="cd00353">
    <property type="entry name" value="Ribosomal_S15p_S13e"/>
    <property type="match status" value="1"/>
</dbReference>
<dbReference type="FunFam" id="1.10.287.10:FF:000002">
    <property type="entry name" value="30S ribosomal protein S15"/>
    <property type="match status" value="1"/>
</dbReference>
<dbReference type="Gene3D" id="6.10.250.3130">
    <property type="match status" value="1"/>
</dbReference>
<dbReference type="Gene3D" id="1.10.287.10">
    <property type="entry name" value="S15/NS1, RNA-binding"/>
    <property type="match status" value="1"/>
</dbReference>
<dbReference type="HAMAP" id="MF_01343_B">
    <property type="entry name" value="Ribosomal_uS15_B"/>
    <property type="match status" value="1"/>
</dbReference>
<dbReference type="InterPro" id="IPR000589">
    <property type="entry name" value="Ribosomal_uS15"/>
</dbReference>
<dbReference type="InterPro" id="IPR005290">
    <property type="entry name" value="Ribosomal_uS15_bac-type"/>
</dbReference>
<dbReference type="InterPro" id="IPR009068">
    <property type="entry name" value="uS15_NS1_RNA-bd_sf"/>
</dbReference>
<dbReference type="NCBIfam" id="TIGR00952">
    <property type="entry name" value="S15_bact"/>
    <property type="match status" value="1"/>
</dbReference>
<dbReference type="PANTHER" id="PTHR23321">
    <property type="entry name" value="RIBOSOMAL PROTEIN S15, BACTERIAL AND ORGANELLAR"/>
    <property type="match status" value="1"/>
</dbReference>
<dbReference type="PANTHER" id="PTHR23321:SF26">
    <property type="entry name" value="SMALL RIBOSOMAL SUBUNIT PROTEIN US15M"/>
    <property type="match status" value="1"/>
</dbReference>
<dbReference type="Pfam" id="PF00312">
    <property type="entry name" value="Ribosomal_S15"/>
    <property type="match status" value="1"/>
</dbReference>
<dbReference type="SMART" id="SM01387">
    <property type="entry name" value="Ribosomal_S15"/>
    <property type="match status" value="1"/>
</dbReference>
<dbReference type="SUPFAM" id="SSF47060">
    <property type="entry name" value="S15/NS1 RNA-binding domain"/>
    <property type="match status" value="1"/>
</dbReference>
<dbReference type="PROSITE" id="PS00362">
    <property type="entry name" value="RIBOSOMAL_S15"/>
    <property type="match status" value="1"/>
</dbReference>
<comment type="function">
    <text evidence="1">One of the primary rRNA binding proteins, it binds directly to 16S rRNA where it helps nucleate assembly of the platform of the 30S subunit by binding and bridging several RNA helices of the 16S rRNA.</text>
</comment>
<comment type="function">
    <text evidence="1">Forms an intersubunit bridge (bridge B4) with the 23S rRNA of the 50S subunit in the ribosome.</text>
</comment>
<comment type="subunit">
    <text evidence="1">Part of the 30S ribosomal subunit. Forms a bridge to the 50S subunit in the 70S ribosome, contacting the 23S rRNA.</text>
</comment>
<comment type="similarity">
    <text evidence="1">Belongs to the universal ribosomal protein uS15 family.</text>
</comment>
<protein>
    <recommendedName>
        <fullName evidence="1">Small ribosomal subunit protein uS15</fullName>
    </recommendedName>
    <alternativeName>
        <fullName evidence="2">30S ribosomal protein S15</fullName>
    </alternativeName>
</protein>
<reference key="1">
    <citation type="journal article" date="2010" name="Genome Biol.">
        <title>Structure and dynamics of the pan-genome of Streptococcus pneumoniae and closely related species.</title>
        <authorList>
            <person name="Donati C."/>
            <person name="Hiller N.L."/>
            <person name="Tettelin H."/>
            <person name="Muzzi A."/>
            <person name="Croucher N.J."/>
            <person name="Angiuoli S.V."/>
            <person name="Oggioni M."/>
            <person name="Dunning Hotopp J.C."/>
            <person name="Hu F.Z."/>
            <person name="Riley D.R."/>
            <person name="Covacci A."/>
            <person name="Mitchell T.J."/>
            <person name="Bentley S.D."/>
            <person name="Kilian M."/>
            <person name="Ehrlich G.D."/>
            <person name="Rappuoli R."/>
            <person name="Moxon E.R."/>
            <person name="Masignani V."/>
        </authorList>
    </citation>
    <scope>NUCLEOTIDE SEQUENCE [LARGE SCALE GENOMIC DNA]</scope>
    <source>
        <strain>Taiwan19F-14</strain>
    </source>
</reference>
<keyword id="KW-0687">Ribonucleoprotein</keyword>
<keyword id="KW-0689">Ribosomal protein</keyword>
<keyword id="KW-0694">RNA-binding</keyword>
<keyword id="KW-0699">rRNA-binding</keyword>
<sequence>MAISKEKKNEIIAQYARHEGDTGSVEVQVAVLTWEINHLNEHIKQHKKDHATYRGLMKKIGRRRNLLAYLRKNDVNRYRELINSLGLRR</sequence>
<evidence type="ECO:0000255" key="1">
    <source>
        <dbReference type="HAMAP-Rule" id="MF_01343"/>
    </source>
</evidence>
<evidence type="ECO:0000305" key="2"/>
<organism>
    <name type="scientific">Streptococcus pneumoniae (strain Taiwan19F-14)</name>
    <dbReference type="NCBI Taxonomy" id="487213"/>
    <lineage>
        <taxon>Bacteria</taxon>
        <taxon>Bacillati</taxon>
        <taxon>Bacillota</taxon>
        <taxon>Bacilli</taxon>
        <taxon>Lactobacillales</taxon>
        <taxon>Streptococcaceae</taxon>
        <taxon>Streptococcus</taxon>
    </lineage>
</organism>
<gene>
    <name evidence="1" type="primary">rpsO</name>
    <name type="ordered locus">SPT_1565</name>
</gene>
<proteinExistence type="inferred from homology"/>
<name>RS15_STRZT</name>
<feature type="chain" id="PRO_1000166444" description="Small ribosomal subunit protein uS15">
    <location>
        <begin position="1"/>
        <end position="89"/>
    </location>
</feature>
<accession>C1CSP2</accession>